<evidence type="ECO:0000250" key="1"/>
<evidence type="ECO:0000250" key="2">
    <source>
        <dbReference type="UniProtKB" id="Q9BSQ5"/>
    </source>
</evidence>
<evidence type="ECO:0000255" key="3">
    <source>
        <dbReference type="PROSITE-ProRule" id="PRU00148"/>
    </source>
</evidence>
<evidence type="ECO:0000256" key="4">
    <source>
        <dbReference type="SAM" id="MobiDB-lite"/>
    </source>
</evidence>
<evidence type="ECO:0000269" key="5">
    <source>
    </source>
</evidence>
<evidence type="ECO:0000269" key="6">
    <source>
    </source>
</evidence>
<evidence type="ECO:0000303" key="7">
    <source ref="3"/>
</evidence>
<evidence type="ECO:0000305" key="8"/>
<accession>Q6DRP4</accession>
<accession>Q0Z802</accession>
<accession>Q568L2</accession>
<organism>
    <name type="scientific">Danio rerio</name>
    <name type="common">Zebrafish</name>
    <name type="synonym">Brachydanio rerio</name>
    <dbReference type="NCBI Taxonomy" id="7955"/>
    <lineage>
        <taxon>Eukaryota</taxon>
        <taxon>Metazoa</taxon>
        <taxon>Chordata</taxon>
        <taxon>Craniata</taxon>
        <taxon>Vertebrata</taxon>
        <taxon>Euteleostomi</taxon>
        <taxon>Actinopterygii</taxon>
        <taxon>Neopterygii</taxon>
        <taxon>Teleostei</taxon>
        <taxon>Ostariophysi</taxon>
        <taxon>Cypriniformes</taxon>
        <taxon>Danionidae</taxon>
        <taxon>Danioninae</taxon>
        <taxon>Danio</taxon>
    </lineage>
</organism>
<dbReference type="EMBL" id="DQ677878">
    <property type="protein sequence ID" value="ABG29499.1"/>
    <property type="molecule type" value="mRNA"/>
</dbReference>
<dbReference type="EMBL" id="AY648715">
    <property type="protein sequence ID" value="AAT68033.1"/>
    <property type="molecule type" value="mRNA"/>
</dbReference>
<dbReference type="EMBL" id="BC092812">
    <property type="protein sequence ID" value="AAH92812.1"/>
    <property type="molecule type" value="mRNA"/>
</dbReference>
<dbReference type="RefSeq" id="NP_001002315.1">
    <molecule id="Q6DRP4-1"/>
    <property type="nucleotide sequence ID" value="NM_001002315.3"/>
</dbReference>
<dbReference type="SMR" id="Q6DRP4"/>
<dbReference type="FunCoup" id="Q6DRP4">
    <property type="interactions" value="1110"/>
</dbReference>
<dbReference type="STRING" id="7955.ENSDARP00000022543"/>
<dbReference type="PaxDb" id="7955-ENSDARP00000022543"/>
<dbReference type="Ensembl" id="ENSDART00000003834">
    <molecule id="Q6DRP4-1"/>
    <property type="protein sequence ID" value="ENSDARP00000022543"/>
    <property type="gene ID" value="ENSDARG00000013705"/>
</dbReference>
<dbReference type="GeneID" id="436586"/>
<dbReference type="KEGG" id="dre:436586"/>
<dbReference type="AGR" id="ZFIN:ZDB-GENE-040712-6"/>
<dbReference type="CTD" id="83605"/>
<dbReference type="ZFIN" id="ZDB-GENE-040712-6">
    <property type="gene designation" value="ccm2"/>
</dbReference>
<dbReference type="eggNOG" id="ENOG502QSZM">
    <property type="taxonomic scope" value="Eukaryota"/>
</dbReference>
<dbReference type="HOGENOM" id="CLU_034621_1_0_1"/>
<dbReference type="InParanoid" id="Q6DRP4"/>
<dbReference type="OMA" id="LKTXDSS"/>
<dbReference type="OrthoDB" id="5828470at2759"/>
<dbReference type="PhylomeDB" id="Q6DRP4"/>
<dbReference type="TreeFam" id="TF328517"/>
<dbReference type="PRO" id="PR:Q6DRP4"/>
<dbReference type="Proteomes" id="UP000000437">
    <property type="component" value="Chromosome 20"/>
</dbReference>
<dbReference type="Bgee" id="ENSDARG00000013705">
    <property type="expression patterns" value="Expressed in granulocyte and 28 other cell types or tissues"/>
</dbReference>
<dbReference type="ExpressionAtlas" id="Q6DRP4">
    <property type="expression patterns" value="baseline"/>
</dbReference>
<dbReference type="GO" id="GO:0005737">
    <property type="term" value="C:cytoplasm"/>
    <property type="evidence" value="ECO:0007669"/>
    <property type="project" value="UniProtKB-SubCell"/>
</dbReference>
<dbReference type="GO" id="GO:0009948">
    <property type="term" value="P:anterior/posterior axis specification"/>
    <property type="evidence" value="ECO:0000316"/>
    <property type="project" value="ZFIN"/>
</dbReference>
<dbReference type="GO" id="GO:1905072">
    <property type="term" value="P:cardiac jelly development"/>
    <property type="evidence" value="ECO:0000315"/>
    <property type="project" value="ZFIN"/>
</dbReference>
<dbReference type="GO" id="GO:0007043">
    <property type="term" value="P:cell-cell junction assembly"/>
    <property type="evidence" value="ECO:0000315"/>
    <property type="project" value="ZFIN"/>
</dbReference>
<dbReference type="GO" id="GO:0060047">
    <property type="term" value="P:heart contraction"/>
    <property type="evidence" value="ECO:0000316"/>
    <property type="project" value="ZFIN"/>
</dbReference>
<dbReference type="GO" id="GO:0007507">
    <property type="term" value="P:heart development"/>
    <property type="evidence" value="ECO:0000315"/>
    <property type="project" value="ZFIN"/>
</dbReference>
<dbReference type="GO" id="GO:0001570">
    <property type="term" value="P:vasculogenesis"/>
    <property type="evidence" value="ECO:0000315"/>
    <property type="project" value="ZFIN"/>
</dbReference>
<dbReference type="CDD" id="cd13516">
    <property type="entry name" value="HHD_CCM2"/>
    <property type="match status" value="1"/>
</dbReference>
<dbReference type="CDD" id="cd13166">
    <property type="entry name" value="PTB_CCM2"/>
    <property type="match status" value="1"/>
</dbReference>
<dbReference type="FunFam" id="1.20.1160.20:FF:000004">
    <property type="entry name" value="Cerebral cavernous malformation 2"/>
    <property type="match status" value="1"/>
</dbReference>
<dbReference type="Gene3D" id="1.20.1160.20">
    <property type="match status" value="1"/>
</dbReference>
<dbReference type="Gene3D" id="2.30.29.30">
    <property type="entry name" value="Pleckstrin-homology domain (PH domain)/Phosphotyrosine-binding domain (PTB)"/>
    <property type="match status" value="1"/>
</dbReference>
<dbReference type="InterPro" id="IPR032375">
    <property type="entry name" value="CCM2_C"/>
</dbReference>
<dbReference type="InterPro" id="IPR026159">
    <property type="entry name" value="Malcavernin"/>
</dbReference>
<dbReference type="InterPro" id="IPR011993">
    <property type="entry name" value="PH-like_dom_sf"/>
</dbReference>
<dbReference type="InterPro" id="IPR006020">
    <property type="entry name" value="PTB/PI_dom"/>
</dbReference>
<dbReference type="PANTHER" id="PTHR21642:SF4">
    <property type="entry name" value="CEREBRAL CAVERNOUS MALFORMATIONS 2 PROTEIN"/>
    <property type="match status" value="1"/>
</dbReference>
<dbReference type="PANTHER" id="PTHR21642">
    <property type="entry name" value="CEREBRAL CAVERNOUS MALFORMATIONS PROTEIN 2 HOMOLOG"/>
    <property type="match status" value="1"/>
</dbReference>
<dbReference type="Pfam" id="PF16545">
    <property type="entry name" value="CCM2_C"/>
    <property type="match status" value="1"/>
</dbReference>
<dbReference type="SMART" id="SM00462">
    <property type="entry name" value="PTB"/>
    <property type="match status" value="1"/>
</dbReference>
<dbReference type="PROSITE" id="PS01179">
    <property type="entry name" value="PID"/>
    <property type="match status" value="1"/>
</dbReference>
<keyword id="KW-0025">Alternative splicing</keyword>
<keyword id="KW-0963">Cytoplasm</keyword>
<keyword id="KW-0217">Developmental protein</keyword>
<keyword id="KW-1185">Reference proteome</keyword>
<comment type="function">
    <text evidence="1 6">Component of the CCM signaling pathway which is a crucial regulator of heart and vessel formation and integrity. May act through the stabilization of endothelial cell junctions. May also function as a scaffold protein for MAP2K3-MAP3K3 signaling. Seems to play a major role in the modulation of MAP3K3-dependent p38 activation induced by hyperosmotic shock (By similarity).</text>
</comment>
<comment type="subunit">
    <text evidence="1 6">Part of a complex with MAP2K3, MAP3K3 and RAC1. Binds RAC1 directly and independently of its nucleotide-bound state (By similarity). Interacts with HEG1 and KRIT1; KRIT1 greatly facilitates the interaction with HEG1.</text>
</comment>
<comment type="subcellular location">
    <subcellularLocation>
        <location evidence="1">Cytoplasm</location>
    </subcellularLocation>
</comment>
<comment type="alternative products">
    <event type="alternative splicing"/>
    <isoform>
        <id>Q6DRP4-1</id>
        <name>1</name>
        <sequence type="displayed"/>
    </isoform>
    <isoform>
        <id>Q6DRP4-2</id>
        <name>2</name>
        <sequence type="described" ref="VSP_015804"/>
    </isoform>
</comment>
<comment type="developmental stage">
    <text evidence="5 6">Expressed in the ventricular zone of the brain at 28 hours post fertilization (hpf) and, at lower levels, in the posterior cardinal vein and in the posterior intermediate inner cell mass. At 48 hpf, still detected in the vein. At 28 and 48 hpf, expressed at low levels in a region near the dorsal aorta.</text>
</comment>
<comment type="domain">
    <text evidence="1">The C-terminal region constitutes an independently folded domain that has structural similarity with the USH1C (harmonin) N-terminus, despite very low sequence similarity.</text>
</comment>
<comment type="disruption phenotype">
    <text evidence="5">The heart chambers in mutant animals are huge, constituted of a monolayered myocardium lined by endocardium.</text>
</comment>
<comment type="similarity">
    <text evidence="8">Belongs to the CCM2 family.</text>
</comment>
<protein>
    <recommendedName>
        <fullName>Cerebral cavernous malformations protein 2 homolog</fullName>
    </recommendedName>
    <alternativeName>
        <fullName evidence="2">Malcavernin</fullName>
    </alternativeName>
    <alternativeName>
        <fullName>Valentine</fullName>
    </alternativeName>
</protein>
<proteinExistence type="evidence at protein level"/>
<sequence length="455" mass="49827">MEEDVKKVKKPGIVSPFKRVFLKGEKGRDKKALEKSTERRALHTFSLSLPDHRIDPDILLNDYIEKEVKYLGQLTSVPGYLNPSSRTEVLQLIDNARKSHQLAGQLTSEQDAVVSLSAYNVKLVWRDGEDIILRVPIHDIAAVSYIRDDSLHLVVLKTAQEPGGSPCHSTEMSKSPTLSSLSESGAVLVEVCCLLVLAVDNKAAAEELCLLLSQVFQIVYTESTIDFLDRAIFDGATTPTRHLSIYSEDSSSKVDVKDVFEAEASTFSFQSSLEAGHSSSPSPTSAPASPQTKTASESELSTTAAELLQDYMTTLRTKLSSKEIQQFATLLHEYRNGASIHEFCINLRQLYGDSRKFLLLGLRPFIPEKDSQHFENFLETIGVKDGRGIITDSFGRYKRTTSSASDSTTNGNGAAGGSDEGTATSEGDEWDRMISDISNDIEALGSSMDQDGVPS</sequence>
<reference key="1">
    <citation type="journal article" date="2006" name="Development">
        <title>santa and valentine pattern concentric growth of cardiac myocardium in the zebrafish.</title>
        <authorList>
            <person name="Mably J.D."/>
            <person name="Chuang L.P."/>
            <person name="Serluca F.C."/>
            <person name="Mohideen M.-A.P.K."/>
            <person name="Chen J.-N."/>
            <person name="Fishman M.C."/>
        </authorList>
    </citation>
    <scope>NUCLEOTIDE SEQUENCE [MRNA] (ISOFORM 1)</scope>
    <scope>DEVELOPMENTAL STAGE</scope>
    <scope>DISRUPTION PHENOTYPE</scope>
</reference>
<reference key="2">
    <citation type="journal article" date="2004" name="Proc. Natl. Acad. Sci. U.S.A.">
        <title>Identification of 315 genes essential for early zebrafish development.</title>
        <authorList>
            <person name="Amsterdam A."/>
            <person name="Nissen R.M."/>
            <person name="Sun Z."/>
            <person name="Swindell E.C."/>
            <person name="Farrington S."/>
            <person name="Hopkins N."/>
        </authorList>
    </citation>
    <scope>NUCLEOTIDE SEQUENCE [LARGE SCALE MRNA] (ISOFORM 1)</scope>
</reference>
<reference key="3">
    <citation type="submission" date="2005-04" db="EMBL/GenBank/DDBJ databases">
        <authorList>
            <consortium name="NIH - Zebrafish Gene Collection (ZGC) project"/>
        </authorList>
    </citation>
    <scope>NUCLEOTIDE SEQUENCE [LARGE SCALE MRNA] (ISOFORM 2)</scope>
    <source>
        <tissue>Ovary</tissue>
    </source>
</reference>
<reference key="4">
    <citation type="journal article" date="2009" name="Nat. Med.">
        <title>Regulation of cardiovascular development and integrity by the heart of glass-cerebral cavernous malformation protein pathway.</title>
        <authorList>
            <person name="Kleaveland B."/>
            <person name="Zheng X."/>
            <person name="Liu J.J."/>
            <person name="Blum Y."/>
            <person name="Tung J.J."/>
            <person name="Zou Z."/>
            <person name="Sweeney S.M."/>
            <person name="Chen M."/>
            <person name="Guo L."/>
            <person name="Lu M.M."/>
            <person name="Zhou D."/>
            <person name="Kitajewski J."/>
            <person name="Affolter M."/>
            <person name="Ginsberg M.H."/>
            <person name="Kahn M.L."/>
        </authorList>
    </citation>
    <scope>FUNCTION</scope>
    <scope>INTERACTION WITH HEG1 AND KRIT1</scope>
    <scope>DEVELOPMENTAL STAGE</scope>
    <scope>MUTAGENESIS OF LEU-197</scope>
</reference>
<name>CCM2_DANRE</name>
<feature type="chain" id="PRO_0000089423" description="Cerebral cavernous malformations protein 2 homolog">
    <location>
        <begin position="1"/>
        <end position="455"/>
    </location>
</feature>
<feature type="domain" description="PID" evidence="3">
    <location>
        <begin position="60"/>
        <end position="247"/>
    </location>
</feature>
<feature type="region of interest" description="Disordered" evidence="4">
    <location>
        <begin position="272"/>
        <end position="299"/>
    </location>
</feature>
<feature type="region of interest" description="Harmonin homology domain">
    <location>
        <begin position="292"/>
        <end position="385"/>
    </location>
</feature>
<feature type="region of interest" description="Disordered" evidence="4">
    <location>
        <begin position="399"/>
        <end position="432"/>
    </location>
</feature>
<feature type="compositionally biased region" description="Low complexity" evidence="4">
    <location>
        <begin position="278"/>
        <end position="295"/>
    </location>
</feature>
<feature type="compositionally biased region" description="Polar residues" evidence="4">
    <location>
        <begin position="400"/>
        <end position="412"/>
    </location>
</feature>
<feature type="splice variant" id="VSP_015804" description="In isoform 2." evidence="7">
    <location>
        <begin position="362"/>
        <end position="455"/>
    </location>
</feature>
<feature type="mutagenesis site" description="Loss of function in heart development. Loss of HEG-binding." evidence="6">
    <original>L</original>
    <variation>R</variation>
    <location>
        <position position="197"/>
    </location>
</feature>
<feature type="sequence conflict" description="In Ref. 3; AAH92812." evidence="8" ref="3">
    <original>L</original>
    <variation>P</variation>
    <location>
        <position position="319"/>
    </location>
</feature>
<gene>
    <name type="primary">ccm2</name>
    <name type="synonym">vtn</name>
</gene>